<evidence type="ECO:0000255" key="1">
    <source>
        <dbReference type="HAMAP-Rule" id="MF_00097"/>
    </source>
</evidence>
<reference key="1">
    <citation type="journal article" date="2006" name="J. Bacteriol.">
        <title>Whole-genome sequence of Listeria welshimeri reveals common steps in genome reduction with Listeria innocua as compared to Listeria monocytogenes.</title>
        <authorList>
            <person name="Hain T."/>
            <person name="Steinweg C."/>
            <person name="Kuenne C.T."/>
            <person name="Billion A."/>
            <person name="Ghai R."/>
            <person name="Chatterjee S.S."/>
            <person name="Domann E."/>
            <person name="Kaerst U."/>
            <person name="Goesmann A."/>
            <person name="Bekel T."/>
            <person name="Bartels D."/>
            <person name="Kaiser O."/>
            <person name="Meyer F."/>
            <person name="Puehler A."/>
            <person name="Weisshaar B."/>
            <person name="Wehland J."/>
            <person name="Liang C."/>
            <person name="Dandekar T."/>
            <person name="Lampidis R."/>
            <person name="Kreft J."/>
            <person name="Goebel W."/>
            <person name="Chakraborty T."/>
        </authorList>
    </citation>
    <scope>NUCLEOTIDE SEQUENCE [LARGE SCALE GENOMIC DNA]</scope>
    <source>
        <strain>ATCC 35897 / DSM 20650 / CCUG 15529 / CIP 8149 / NCTC 11857 / SLCC 5334 / V8</strain>
    </source>
</reference>
<feature type="chain" id="PRO_1000008148" description="Thiamine-phosphate synthase">
    <location>
        <begin position="1"/>
        <end position="208"/>
    </location>
</feature>
<feature type="binding site" evidence="1">
    <location>
        <begin position="37"/>
        <end position="41"/>
    </location>
    <ligand>
        <name>4-amino-2-methyl-5-(diphosphooxymethyl)pyrimidine</name>
        <dbReference type="ChEBI" id="CHEBI:57841"/>
    </ligand>
</feature>
<feature type="binding site" evidence="1">
    <location>
        <position position="73"/>
    </location>
    <ligand>
        <name>4-amino-2-methyl-5-(diphosphooxymethyl)pyrimidine</name>
        <dbReference type="ChEBI" id="CHEBI:57841"/>
    </ligand>
</feature>
<feature type="binding site" evidence="1">
    <location>
        <position position="74"/>
    </location>
    <ligand>
        <name>Mg(2+)</name>
        <dbReference type="ChEBI" id="CHEBI:18420"/>
    </ligand>
</feature>
<feature type="binding site" evidence="1">
    <location>
        <position position="93"/>
    </location>
    <ligand>
        <name>Mg(2+)</name>
        <dbReference type="ChEBI" id="CHEBI:18420"/>
    </ligand>
</feature>
<feature type="binding site" evidence="1">
    <location>
        <position position="112"/>
    </location>
    <ligand>
        <name>4-amino-2-methyl-5-(diphosphooxymethyl)pyrimidine</name>
        <dbReference type="ChEBI" id="CHEBI:57841"/>
    </ligand>
</feature>
<feature type="binding site" evidence="1">
    <location>
        <begin position="139"/>
        <end position="141"/>
    </location>
    <ligand>
        <name>2-[(2R,5Z)-2-carboxy-4-methylthiazol-5(2H)-ylidene]ethyl phosphate</name>
        <dbReference type="ChEBI" id="CHEBI:62899"/>
    </ligand>
</feature>
<feature type="binding site" evidence="1">
    <location>
        <position position="142"/>
    </location>
    <ligand>
        <name>4-amino-2-methyl-5-(diphosphooxymethyl)pyrimidine</name>
        <dbReference type="ChEBI" id="CHEBI:57841"/>
    </ligand>
</feature>
<feature type="binding site" evidence="1">
    <location>
        <position position="171"/>
    </location>
    <ligand>
        <name>2-[(2R,5Z)-2-carboxy-4-methylthiazol-5(2H)-ylidene]ethyl phosphate</name>
        <dbReference type="ChEBI" id="CHEBI:62899"/>
    </ligand>
</feature>
<feature type="binding site" evidence="1">
    <location>
        <begin position="191"/>
        <end position="192"/>
    </location>
    <ligand>
        <name>2-[(2R,5Z)-2-carboxy-4-methylthiazol-5(2H)-ylidene]ethyl phosphate</name>
        <dbReference type="ChEBI" id="CHEBI:62899"/>
    </ligand>
</feature>
<protein>
    <recommendedName>
        <fullName evidence="1">Thiamine-phosphate synthase</fullName>
        <shortName evidence="1">TP synthase</shortName>
        <shortName evidence="1">TPS</shortName>
        <ecNumber evidence="1">2.5.1.3</ecNumber>
    </recommendedName>
    <alternativeName>
        <fullName evidence="1">Thiamine-phosphate pyrophosphorylase</fullName>
        <shortName evidence="1">TMP pyrophosphorylase</shortName>
        <shortName evidence="1">TMP-PPase</shortName>
    </alternativeName>
</protein>
<proteinExistence type="inferred from homology"/>
<keyword id="KW-0460">Magnesium</keyword>
<keyword id="KW-0479">Metal-binding</keyword>
<keyword id="KW-0784">Thiamine biosynthesis</keyword>
<keyword id="KW-0808">Transferase</keyword>
<sequence length="208" mass="22066">MKEELAVYFIAGTQDIVRGTLPSVLEEALKGGITCFQYREKGAGSLQTASERKEMALECQKLCAKYQVPFIINDDVVLALEIGADGIHVGQNDEEIHQVITSCAGKMKIGLSVHSVSEAEEAERLGAVDYIGVGPIFPTISKADAEPESGTEILKEIRRAGIKLPIVGIGGINEANIAEVLAAGADGVSVISAITRADDYQLVIANLI</sequence>
<accession>A0AFC5</accession>
<comment type="function">
    <text evidence="1">Condenses 4-methyl-5-(beta-hydroxyethyl)thiazole monophosphate (THZ-P) and 2-methyl-4-amino-5-hydroxymethyl pyrimidine pyrophosphate (HMP-PP) to form thiamine monophosphate (TMP).</text>
</comment>
<comment type="catalytic activity">
    <reaction evidence="1">
        <text>2-[(2R,5Z)-2-carboxy-4-methylthiazol-5(2H)-ylidene]ethyl phosphate + 4-amino-2-methyl-5-(diphosphooxymethyl)pyrimidine + 2 H(+) = thiamine phosphate + CO2 + diphosphate</text>
        <dbReference type="Rhea" id="RHEA:47844"/>
        <dbReference type="ChEBI" id="CHEBI:15378"/>
        <dbReference type="ChEBI" id="CHEBI:16526"/>
        <dbReference type="ChEBI" id="CHEBI:33019"/>
        <dbReference type="ChEBI" id="CHEBI:37575"/>
        <dbReference type="ChEBI" id="CHEBI:57841"/>
        <dbReference type="ChEBI" id="CHEBI:62899"/>
        <dbReference type="EC" id="2.5.1.3"/>
    </reaction>
</comment>
<comment type="catalytic activity">
    <reaction evidence="1">
        <text>2-(2-carboxy-4-methylthiazol-5-yl)ethyl phosphate + 4-amino-2-methyl-5-(diphosphooxymethyl)pyrimidine + 2 H(+) = thiamine phosphate + CO2 + diphosphate</text>
        <dbReference type="Rhea" id="RHEA:47848"/>
        <dbReference type="ChEBI" id="CHEBI:15378"/>
        <dbReference type="ChEBI" id="CHEBI:16526"/>
        <dbReference type="ChEBI" id="CHEBI:33019"/>
        <dbReference type="ChEBI" id="CHEBI:37575"/>
        <dbReference type="ChEBI" id="CHEBI:57841"/>
        <dbReference type="ChEBI" id="CHEBI:62890"/>
        <dbReference type="EC" id="2.5.1.3"/>
    </reaction>
</comment>
<comment type="catalytic activity">
    <reaction evidence="1">
        <text>4-methyl-5-(2-phosphooxyethyl)-thiazole + 4-amino-2-methyl-5-(diphosphooxymethyl)pyrimidine + H(+) = thiamine phosphate + diphosphate</text>
        <dbReference type="Rhea" id="RHEA:22328"/>
        <dbReference type="ChEBI" id="CHEBI:15378"/>
        <dbReference type="ChEBI" id="CHEBI:33019"/>
        <dbReference type="ChEBI" id="CHEBI:37575"/>
        <dbReference type="ChEBI" id="CHEBI:57841"/>
        <dbReference type="ChEBI" id="CHEBI:58296"/>
        <dbReference type="EC" id="2.5.1.3"/>
    </reaction>
</comment>
<comment type="cofactor">
    <cofactor evidence="1">
        <name>Mg(2+)</name>
        <dbReference type="ChEBI" id="CHEBI:18420"/>
    </cofactor>
    <text evidence="1">Binds 1 Mg(2+) ion per subunit.</text>
</comment>
<comment type="pathway">
    <text evidence="1">Cofactor biosynthesis; thiamine diphosphate biosynthesis; thiamine phosphate from 4-amino-2-methyl-5-diphosphomethylpyrimidine and 4-methyl-5-(2-phosphoethyl)-thiazole: step 1/1.</text>
</comment>
<comment type="similarity">
    <text evidence="1">Belongs to the thiamine-phosphate synthase family.</text>
</comment>
<organism>
    <name type="scientific">Listeria welshimeri serovar 6b (strain ATCC 35897 / DSM 20650 / CCUG 15529 / CIP 8149 / NCTC 11857 / SLCC 5334 / V8)</name>
    <dbReference type="NCBI Taxonomy" id="386043"/>
    <lineage>
        <taxon>Bacteria</taxon>
        <taxon>Bacillati</taxon>
        <taxon>Bacillota</taxon>
        <taxon>Bacilli</taxon>
        <taxon>Bacillales</taxon>
        <taxon>Listeriaceae</taxon>
        <taxon>Listeria</taxon>
    </lineage>
</organism>
<dbReference type="EC" id="2.5.1.3" evidence="1"/>
<dbReference type="EMBL" id="AM263198">
    <property type="protein sequence ID" value="CAK19707.1"/>
    <property type="molecule type" value="Genomic_DNA"/>
</dbReference>
<dbReference type="RefSeq" id="WP_011701145.1">
    <property type="nucleotide sequence ID" value="NC_008555.1"/>
</dbReference>
<dbReference type="SMR" id="A0AFC5"/>
<dbReference type="STRING" id="386043.lwe0289"/>
<dbReference type="GeneID" id="61188182"/>
<dbReference type="KEGG" id="lwe:lwe0289"/>
<dbReference type="eggNOG" id="COG0352">
    <property type="taxonomic scope" value="Bacteria"/>
</dbReference>
<dbReference type="HOGENOM" id="CLU_018272_3_2_9"/>
<dbReference type="OrthoDB" id="9812206at2"/>
<dbReference type="UniPathway" id="UPA00060">
    <property type="reaction ID" value="UER00141"/>
</dbReference>
<dbReference type="Proteomes" id="UP000000779">
    <property type="component" value="Chromosome"/>
</dbReference>
<dbReference type="GO" id="GO:0005737">
    <property type="term" value="C:cytoplasm"/>
    <property type="evidence" value="ECO:0007669"/>
    <property type="project" value="TreeGrafter"/>
</dbReference>
<dbReference type="GO" id="GO:0000287">
    <property type="term" value="F:magnesium ion binding"/>
    <property type="evidence" value="ECO:0007669"/>
    <property type="project" value="UniProtKB-UniRule"/>
</dbReference>
<dbReference type="GO" id="GO:0004789">
    <property type="term" value="F:thiamine-phosphate diphosphorylase activity"/>
    <property type="evidence" value="ECO:0007669"/>
    <property type="project" value="UniProtKB-UniRule"/>
</dbReference>
<dbReference type="GO" id="GO:0009228">
    <property type="term" value="P:thiamine biosynthetic process"/>
    <property type="evidence" value="ECO:0007669"/>
    <property type="project" value="UniProtKB-KW"/>
</dbReference>
<dbReference type="GO" id="GO:0009229">
    <property type="term" value="P:thiamine diphosphate biosynthetic process"/>
    <property type="evidence" value="ECO:0007669"/>
    <property type="project" value="UniProtKB-UniRule"/>
</dbReference>
<dbReference type="CDD" id="cd00564">
    <property type="entry name" value="TMP_TenI"/>
    <property type="match status" value="1"/>
</dbReference>
<dbReference type="FunFam" id="3.20.20.70:FF:000096">
    <property type="entry name" value="Thiamine-phosphate synthase"/>
    <property type="match status" value="1"/>
</dbReference>
<dbReference type="Gene3D" id="3.20.20.70">
    <property type="entry name" value="Aldolase class I"/>
    <property type="match status" value="1"/>
</dbReference>
<dbReference type="HAMAP" id="MF_00097">
    <property type="entry name" value="TMP_synthase"/>
    <property type="match status" value="1"/>
</dbReference>
<dbReference type="InterPro" id="IPR013785">
    <property type="entry name" value="Aldolase_TIM"/>
</dbReference>
<dbReference type="InterPro" id="IPR036206">
    <property type="entry name" value="ThiamineP_synth_sf"/>
</dbReference>
<dbReference type="InterPro" id="IPR022998">
    <property type="entry name" value="ThiamineP_synth_TenI"/>
</dbReference>
<dbReference type="InterPro" id="IPR034291">
    <property type="entry name" value="TMP_synthase"/>
</dbReference>
<dbReference type="NCBIfam" id="TIGR00693">
    <property type="entry name" value="thiE"/>
    <property type="match status" value="1"/>
</dbReference>
<dbReference type="PANTHER" id="PTHR20857">
    <property type="entry name" value="THIAMINE-PHOSPHATE PYROPHOSPHORYLASE"/>
    <property type="match status" value="1"/>
</dbReference>
<dbReference type="PANTHER" id="PTHR20857:SF15">
    <property type="entry name" value="THIAMINE-PHOSPHATE SYNTHASE"/>
    <property type="match status" value="1"/>
</dbReference>
<dbReference type="Pfam" id="PF02581">
    <property type="entry name" value="TMP-TENI"/>
    <property type="match status" value="1"/>
</dbReference>
<dbReference type="SUPFAM" id="SSF51391">
    <property type="entry name" value="Thiamin phosphate synthase"/>
    <property type="match status" value="1"/>
</dbReference>
<gene>
    <name evidence="1" type="primary">thiE</name>
    <name type="ordered locus">lwe0289</name>
</gene>
<name>THIE_LISW6</name>